<proteinExistence type="inferred from homology"/>
<comment type="similarity">
    <text evidence="1">Belongs to the bacterial ribosomal protein bS21 family.</text>
</comment>
<feature type="chain" id="PRO_0000266687" description="Small ribosomal subunit protein bS21">
    <location>
        <begin position="1"/>
        <end position="71"/>
    </location>
</feature>
<feature type="region of interest" description="Disordered" evidence="2">
    <location>
        <begin position="48"/>
        <end position="71"/>
    </location>
</feature>
<feature type="compositionally biased region" description="Basic and acidic residues" evidence="2">
    <location>
        <begin position="60"/>
        <end position="71"/>
    </location>
</feature>
<organism>
    <name type="scientific">Haemophilus influenzae (strain 86-028NP)</name>
    <dbReference type="NCBI Taxonomy" id="281310"/>
    <lineage>
        <taxon>Bacteria</taxon>
        <taxon>Pseudomonadati</taxon>
        <taxon>Pseudomonadota</taxon>
        <taxon>Gammaproteobacteria</taxon>
        <taxon>Pasteurellales</taxon>
        <taxon>Pasteurellaceae</taxon>
        <taxon>Haemophilus</taxon>
    </lineage>
</organism>
<keyword id="KW-0687">Ribonucleoprotein</keyword>
<keyword id="KW-0689">Ribosomal protein</keyword>
<gene>
    <name evidence="1" type="primary">rpsU</name>
    <name type="ordered locus">NTHI0657</name>
</gene>
<accession>Q4QN17</accession>
<protein>
    <recommendedName>
        <fullName evidence="1">Small ribosomal subunit protein bS21</fullName>
    </recommendedName>
    <alternativeName>
        <fullName evidence="3">30S ribosomal protein S21</fullName>
    </alternativeName>
</protein>
<sequence length="71" mass="8462">MPVIKVRENESFDVALRRFKRSCEKAGILAEVRAREFYEKPTTIRKRENATLAKRHAKRNARENARNTRLY</sequence>
<name>RS21_HAEI8</name>
<dbReference type="EMBL" id="CP000057">
    <property type="protein sequence ID" value="AAX87580.1"/>
    <property type="molecule type" value="Genomic_DNA"/>
</dbReference>
<dbReference type="RefSeq" id="WP_005627632.1">
    <property type="nucleotide sequence ID" value="NC_007146.2"/>
</dbReference>
<dbReference type="SMR" id="Q4QN17"/>
<dbReference type="GeneID" id="93219540"/>
<dbReference type="KEGG" id="hit:NTHI0657"/>
<dbReference type="HOGENOM" id="CLU_159258_1_0_6"/>
<dbReference type="Proteomes" id="UP000002525">
    <property type="component" value="Chromosome"/>
</dbReference>
<dbReference type="GO" id="GO:1990904">
    <property type="term" value="C:ribonucleoprotein complex"/>
    <property type="evidence" value="ECO:0007669"/>
    <property type="project" value="UniProtKB-KW"/>
</dbReference>
<dbReference type="GO" id="GO:0005840">
    <property type="term" value="C:ribosome"/>
    <property type="evidence" value="ECO:0007669"/>
    <property type="project" value="UniProtKB-KW"/>
</dbReference>
<dbReference type="GO" id="GO:0003735">
    <property type="term" value="F:structural constituent of ribosome"/>
    <property type="evidence" value="ECO:0007669"/>
    <property type="project" value="InterPro"/>
</dbReference>
<dbReference type="GO" id="GO:0006412">
    <property type="term" value="P:translation"/>
    <property type="evidence" value="ECO:0007669"/>
    <property type="project" value="UniProtKB-UniRule"/>
</dbReference>
<dbReference type="Gene3D" id="1.20.5.1150">
    <property type="entry name" value="Ribosomal protein S8"/>
    <property type="match status" value="1"/>
</dbReference>
<dbReference type="HAMAP" id="MF_00358">
    <property type="entry name" value="Ribosomal_bS21"/>
    <property type="match status" value="1"/>
</dbReference>
<dbReference type="InterPro" id="IPR001911">
    <property type="entry name" value="Ribosomal_bS21"/>
</dbReference>
<dbReference type="InterPro" id="IPR018278">
    <property type="entry name" value="Ribosomal_bS21_CS"/>
</dbReference>
<dbReference type="InterPro" id="IPR038380">
    <property type="entry name" value="Ribosomal_bS21_sf"/>
</dbReference>
<dbReference type="NCBIfam" id="TIGR00030">
    <property type="entry name" value="S21p"/>
    <property type="match status" value="1"/>
</dbReference>
<dbReference type="PANTHER" id="PTHR21109">
    <property type="entry name" value="MITOCHONDRIAL 28S RIBOSOMAL PROTEIN S21"/>
    <property type="match status" value="1"/>
</dbReference>
<dbReference type="PANTHER" id="PTHR21109:SF22">
    <property type="entry name" value="SMALL RIBOSOMAL SUBUNIT PROTEIN BS21"/>
    <property type="match status" value="1"/>
</dbReference>
<dbReference type="Pfam" id="PF01165">
    <property type="entry name" value="Ribosomal_S21"/>
    <property type="match status" value="1"/>
</dbReference>
<dbReference type="PRINTS" id="PR00976">
    <property type="entry name" value="RIBOSOMALS21"/>
</dbReference>
<dbReference type="PROSITE" id="PS01181">
    <property type="entry name" value="RIBOSOMAL_S21"/>
    <property type="match status" value="1"/>
</dbReference>
<evidence type="ECO:0000255" key="1">
    <source>
        <dbReference type="HAMAP-Rule" id="MF_00358"/>
    </source>
</evidence>
<evidence type="ECO:0000256" key="2">
    <source>
        <dbReference type="SAM" id="MobiDB-lite"/>
    </source>
</evidence>
<evidence type="ECO:0000305" key="3"/>
<reference key="1">
    <citation type="journal article" date="2005" name="J. Bacteriol.">
        <title>Genomic sequence of an otitis media isolate of nontypeable Haemophilus influenzae: comparative study with H. influenzae serotype d, strain KW20.</title>
        <authorList>
            <person name="Harrison A."/>
            <person name="Dyer D.W."/>
            <person name="Gillaspy A."/>
            <person name="Ray W.C."/>
            <person name="Mungur R."/>
            <person name="Carson M.B."/>
            <person name="Zhong H."/>
            <person name="Gipson J."/>
            <person name="Gipson M."/>
            <person name="Johnson L.S."/>
            <person name="Lewis L."/>
            <person name="Bakaletz L.O."/>
            <person name="Munson R.S. Jr."/>
        </authorList>
    </citation>
    <scope>NUCLEOTIDE SEQUENCE [LARGE SCALE GENOMIC DNA]</scope>
    <source>
        <strain>86-028NP</strain>
    </source>
</reference>